<sequence>MLTRKQHELLMFIHERIKESGVSPSFDEMKEALDLASKSGIHRLITALEERGFIRRLAHRARALEVVKLPQQATTAAPPKGRGAFRPQVLEGGGQAPTTSAQPQMAADNSRELPILGRIAAGTPIDAIQHERERLPVPESMLGAGEHYVLEVQGDSMIEAGILDGDYVIIKKGDTANSGEIVVALVGEEATLKRLRKKGGSIALEAANPKYETRIFGPDQVEVQGKLVGLIRRYH</sequence>
<dbReference type="EC" id="3.4.21.88" evidence="1"/>
<dbReference type="EMBL" id="CP000927">
    <property type="protein sequence ID" value="ABZ71909.1"/>
    <property type="molecule type" value="Genomic_DNA"/>
</dbReference>
<dbReference type="SMR" id="B0SYZ8"/>
<dbReference type="STRING" id="366602.Caul_2782"/>
<dbReference type="MEROPS" id="S24.001"/>
<dbReference type="KEGG" id="cak:Caul_2782"/>
<dbReference type="eggNOG" id="COG1974">
    <property type="taxonomic scope" value="Bacteria"/>
</dbReference>
<dbReference type="HOGENOM" id="CLU_066192_45_2_5"/>
<dbReference type="OrthoDB" id="9802364at2"/>
<dbReference type="GO" id="GO:0003677">
    <property type="term" value="F:DNA binding"/>
    <property type="evidence" value="ECO:0007669"/>
    <property type="project" value="UniProtKB-UniRule"/>
</dbReference>
<dbReference type="GO" id="GO:0004252">
    <property type="term" value="F:serine-type endopeptidase activity"/>
    <property type="evidence" value="ECO:0007669"/>
    <property type="project" value="UniProtKB-UniRule"/>
</dbReference>
<dbReference type="GO" id="GO:0006281">
    <property type="term" value="P:DNA repair"/>
    <property type="evidence" value="ECO:0007669"/>
    <property type="project" value="UniProtKB-UniRule"/>
</dbReference>
<dbReference type="GO" id="GO:0006260">
    <property type="term" value="P:DNA replication"/>
    <property type="evidence" value="ECO:0007669"/>
    <property type="project" value="UniProtKB-UniRule"/>
</dbReference>
<dbReference type="GO" id="GO:0045892">
    <property type="term" value="P:negative regulation of DNA-templated transcription"/>
    <property type="evidence" value="ECO:0007669"/>
    <property type="project" value="UniProtKB-UniRule"/>
</dbReference>
<dbReference type="GO" id="GO:0006508">
    <property type="term" value="P:proteolysis"/>
    <property type="evidence" value="ECO:0007669"/>
    <property type="project" value="InterPro"/>
</dbReference>
<dbReference type="GO" id="GO:0009432">
    <property type="term" value="P:SOS response"/>
    <property type="evidence" value="ECO:0007669"/>
    <property type="project" value="UniProtKB-UniRule"/>
</dbReference>
<dbReference type="CDD" id="cd06529">
    <property type="entry name" value="S24_LexA-like"/>
    <property type="match status" value="1"/>
</dbReference>
<dbReference type="FunFam" id="1.10.10.10:FF:000102">
    <property type="entry name" value="LexA repressor"/>
    <property type="match status" value="1"/>
</dbReference>
<dbReference type="FunFam" id="2.10.109.10:FF:000001">
    <property type="entry name" value="LexA repressor"/>
    <property type="match status" value="1"/>
</dbReference>
<dbReference type="Gene3D" id="2.10.109.10">
    <property type="entry name" value="Umud Fragment, subunit A"/>
    <property type="match status" value="1"/>
</dbReference>
<dbReference type="Gene3D" id="1.10.10.10">
    <property type="entry name" value="Winged helix-like DNA-binding domain superfamily/Winged helix DNA-binding domain"/>
    <property type="match status" value="1"/>
</dbReference>
<dbReference type="HAMAP" id="MF_00015">
    <property type="entry name" value="LexA"/>
    <property type="match status" value="1"/>
</dbReference>
<dbReference type="InterPro" id="IPR006200">
    <property type="entry name" value="LexA"/>
</dbReference>
<dbReference type="InterPro" id="IPR039418">
    <property type="entry name" value="LexA-like"/>
</dbReference>
<dbReference type="InterPro" id="IPR036286">
    <property type="entry name" value="LexA/Signal_pep-like_sf"/>
</dbReference>
<dbReference type="InterPro" id="IPR006199">
    <property type="entry name" value="LexA_DNA-bd_dom"/>
</dbReference>
<dbReference type="InterPro" id="IPR050077">
    <property type="entry name" value="LexA_repressor"/>
</dbReference>
<dbReference type="InterPro" id="IPR006197">
    <property type="entry name" value="Peptidase_S24_LexA"/>
</dbReference>
<dbReference type="InterPro" id="IPR015927">
    <property type="entry name" value="Peptidase_S24_S26A/B/C"/>
</dbReference>
<dbReference type="InterPro" id="IPR036388">
    <property type="entry name" value="WH-like_DNA-bd_sf"/>
</dbReference>
<dbReference type="InterPro" id="IPR036390">
    <property type="entry name" value="WH_DNA-bd_sf"/>
</dbReference>
<dbReference type="NCBIfam" id="TIGR00498">
    <property type="entry name" value="lexA"/>
    <property type="match status" value="1"/>
</dbReference>
<dbReference type="PANTHER" id="PTHR33516">
    <property type="entry name" value="LEXA REPRESSOR"/>
    <property type="match status" value="1"/>
</dbReference>
<dbReference type="PANTHER" id="PTHR33516:SF2">
    <property type="entry name" value="LEXA REPRESSOR-RELATED"/>
    <property type="match status" value="1"/>
</dbReference>
<dbReference type="Pfam" id="PF01726">
    <property type="entry name" value="LexA_DNA_bind"/>
    <property type="match status" value="1"/>
</dbReference>
<dbReference type="Pfam" id="PF00717">
    <property type="entry name" value="Peptidase_S24"/>
    <property type="match status" value="1"/>
</dbReference>
<dbReference type="PRINTS" id="PR00726">
    <property type="entry name" value="LEXASERPTASE"/>
</dbReference>
<dbReference type="SUPFAM" id="SSF51306">
    <property type="entry name" value="LexA/Signal peptidase"/>
    <property type="match status" value="1"/>
</dbReference>
<dbReference type="SUPFAM" id="SSF46785">
    <property type="entry name" value="Winged helix' DNA-binding domain"/>
    <property type="match status" value="1"/>
</dbReference>
<reference key="1">
    <citation type="submission" date="2008-01" db="EMBL/GenBank/DDBJ databases">
        <title>Complete sequence of chromosome of Caulobacter sp. K31.</title>
        <authorList>
            <consortium name="US DOE Joint Genome Institute"/>
            <person name="Copeland A."/>
            <person name="Lucas S."/>
            <person name="Lapidus A."/>
            <person name="Barry K."/>
            <person name="Glavina del Rio T."/>
            <person name="Dalin E."/>
            <person name="Tice H."/>
            <person name="Pitluck S."/>
            <person name="Bruce D."/>
            <person name="Goodwin L."/>
            <person name="Thompson L.S."/>
            <person name="Brettin T."/>
            <person name="Detter J.C."/>
            <person name="Han C."/>
            <person name="Schmutz J."/>
            <person name="Larimer F."/>
            <person name="Land M."/>
            <person name="Hauser L."/>
            <person name="Kyrpides N."/>
            <person name="Kim E."/>
            <person name="Stephens C."/>
            <person name="Richardson P."/>
        </authorList>
    </citation>
    <scope>NUCLEOTIDE SEQUENCE [LARGE SCALE GENOMIC DNA]</scope>
    <source>
        <strain>K31</strain>
    </source>
</reference>
<proteinExistence type="inferred from homology"/>
<gene>
    <name evidence="1" type="primary">lexA</name>
    <name type="ordered locus">Caul_2782</name>
</gene>
<keyword id="KW-0068">Autocatalytic cleavage</keyword>
<keyword id="KW-0227">DNA damage</keyword>
<keyword id="KW-0234">DNA repair</keyword>
<keyword id="KW-0235">DNA replication</keyword>
<keyword id="KW-0238">DNA-binding</keyword>
<keyword id="KW-0378">Hydrolase</keyword>
<keyword id="KW-0678">Repressor</keyword>
<keyword id="KW-0742">SOS response</keyword>
<keyword id="KW-0804">Transcription</keyword>
<keyword id="KW-0805">Transcription regulation</keyword>
<comment type="function">
    <text evidence="1">Represses a number of genes involved in the response to DNA damage (SOS response), including recA and lexA. In the presence of single-stranded DNA, RecA interacts with LexA causing an autocatalytic cleavage which disrupts the DNA-binding part of LexA, leading to derepression of the SOS regulon and eventually DNA repair.</text>
</comment>
<comment type="catalytic activity">
    <reaction evidence="1">
        <text>Hydrolysis of Ala-|-Gly bond in repressor LexA.</text>
        <dbReference type="EC" id="3.4.21.88"/>
    </reaction>
</comment>
<comment type="subunit">
    <text evidence="1">Homodimer.</text>
</comment>
<comment type="similarity">
    <text evidence="1">Belongs to the peptidase S24 family.</text>
</comment>
<accession>B0SYZ8</accession>
<organism>
    <name type="scientific">Caulobacter sp. (strain K31)</name>
    <dbReference type="NCBI Taxonomy" id="366602"/>
    <lineage>
        <taxon>Bacteria</taxon>
        <taxon>Pseudomonadati</taxon>
        <taxon>Pseudomonadota</taxon>
        <taxon>Alphaproteobacteria</taxon>
        <taxon>Caulobacterales</taxon>
        <taxon>Caulobacteraceae</taxon>
        <taxon>Caulobacter</taxon>
    </lineage>
</organism>
<name>LEXA_CAUSK</name>
<protein>
    <recommendedName>
        <fullName evidence="1">LexA repressor</fullName>
        <ecNumber evidence="1">3.4.21.88</ecNumber>
    </recommendedName>
</protein>
<feature type="chain" id="PRO_1000074050" description="LexA repressor">
    <location>
        <begin position="1"/>
        <end position="235"/>
    </location>
</feature>
<feature type="DNA-binding region" description="H-T-H motif" evidence="1">
    <location>
        <begin position="26"/>
        <end position="46"/>
    </location>
</feature>
<feature type="region of interest" description="Disordered" evidence="2">
    <location>
        <begin position="72"/>
        <end position="104"/>
    </location>
</feature>
<feature type="active site" description="For autocatalytic cleavage activity" evidence="1">
    <location>
        <position position="156"/>
    </location>
</feature>
<feature type="active site" description="For autocatalytic cleavage activity" evidence="1">
    <location>
        <position position="193"/>
    </location>
</feature>
<feature type="site" description="Cleavage; by autolysis" evidence="1">
    <location>
        <begin position="121"/>
        <end position="122"/>
    </location>
</feature>
<evidence type="ECO:0000255" key="1">
    <source>
        <dbReference type="HAMAP-Rule" id="MF_00015"/>
    </source>
</evidence>
<evidence type="ECO:0000256" key="2">
    <source>
        <dbReference type="SAM" id="MobiDB-lite"/>
    </source>
</evidence>